<dbReference type="EC" id="2.3.1.225" evidence="1"/>
<dbReference type="EMBL" id="CR380951">
    <property type="protein sequence ID" value="CAG58717.1"/>
    <property type="molecule type" value="Genomic_DNA"/>
</dbReference>
<dbReference type="RefSeq" id="XP_445798.1">
    <property type="nucleotide sequence ID" value="XM_445798.1"/>
</dbReference>
<dbReference type="FunCoup" id="Q6FVE6">
    <property type="interactions" value="36"/>
</dbReference>
<dbReference type="STRING" id="284593.Q6FVE6"/>
<dbReference type="EnsemblFungi" id="CAGL0E02497g-T">
    <property type="protein sequence ID" value="CAGL0E02497g-T-p1"/>
    <property type="gene ID" value="CAGL0E02497g"/>
</dbReference>
<dbReference type="KEGG" id="cgr:2887488"/>
<dbReference type="CGD" id="CAL0129088">
    <property type="gene designation" value="CAGL0E02497g"/>
</dbReference>
<dbReference type="VEuPathDB" id="FungiDB:CAGL0E02497g"/>
<dbReference type="eggNOG" id="KOG1314">
    <property type="taxonomic scope" value="Eukaryota"/>
</dbReference>
<dbReference type="HOGENOM" id="CLU_027721_8_0_1"/>
<dbReference type="InParanoid" id="Q6FVE6"/>
<dbReference type="OMA" id="TMNCVGY"/>
<dbReference type="Proteomes" id="UP000002428">
    <property type="component" value="Chromosome E"/>
</dbReference>
<dbReference type="GO" id="GO:0005789">
    <property type="term" value="C:endoplasmic reticulum membrane"/>
    <property type="evidence" value="ECO:0007669"/>
    <property type="project" value="UniProtKB-SubCell"/>
</dbReference>
<dbReference type="GO" id="GO:0019706">
    <property type="term" value="F:protein-cysteine S-palmitoyltransferase activity"/>
    <property type="evidence" value="ECO:0007669"/>
    <property type="project" value="UniProtKB-UniRule"/>
</dbReference>
<dbReference type="HAMAP" id="MF_03199">
    <property type="entry name" value="DHHC_PAT_PFA4"/>
    <property type="match status" value="1"/>
</dbReference>
<dbReference type="InterPro" id="IPR001594">
    <property type="entry name" value="Palmitoyltrfase_DHHC"/>
</dbReference>
<dbReference type="InterPro" id="IPR033682">
    <property type="entry name" value="PFA4"/>
</dbReference>
<dbReference type="InterPro" id="IPR039859">
    <property type="entry name" value="PFA4/ZDH16/20/ERF2-like"/>
</dbReference>
<dbReference type="PANTHER" id="PTHR12246">
    <property type="entry name" value="PALMITOYLTRANSFERASE ZDHHC16"/>
    <property type="match status" value="1"/>
</dbReference>
<dbReference type="Pfam" id="PF01529">
    <property type="entry name" value="DHHC"/>
    <property type="match status" value="1"/>
</dbReference>
<dbReference type="PROSITE" id="PS50216">
    <property type="entry name" value="DHHC"/>
    <property type="match status" value="1"/>
</dbReference>
<protein>
    <recommendedName>
        <fullName evidence="1">Palmitoyltransferase PFA4</fullName>
        <ecNumber evidence="1">2.3.1.225</ecNumber>
    </recommendedName>
    <alternativeName>
        <fullName evidence="1">Protein S-acyltransferase</fullName>
        <shortName evidence="1">PAT</shortName>
    </alternativeName>
    <alternativeName>
        <fullName evidence="1">Protein fatty acyltransferase 4</fullName>
    </alternativeName>
</protein>
<reference key="1">
    <citation type="journal article" date="2004" name="Nature">
        <title>Genome evolution in yeasts.</title>
        <authorList>
            <person name="Dujon B."/>
            <person name="Sherman D."/>
            <person name="Fischer G."/>
            <person name="Durrens P."/>
            <person name="Casaregola S."/>
            <person name="Lafontaine I."/>
            <person name="de Montigny J."/>
            <person name="Marck C."/>
            <person name="Neuveglise C."/>
            <person name="Talla E."/>
            <person name="Goffard N."/>
            <person name="Frangeul L."/>
            <person name="Aigle M."/>
            <person name="Anthouard V."/>
            <person name="Babour A."/>
            <person name="Barbe V."/>
            <person name="Barnay S."/>
            <person name="Blanchin S."/>
            <person name="Beckerich J.-M."/>
            <person name="Beyne E."/>
            <person name="Bleykasten C."/>
            <person name="Boisrame A."/>
            <person name="Boyer J."/>
            <person name="Cattolico L."/>
            <person name="Confanioleri F."/>
            <person name="de Daruvar A."/>
            <person name="Despons L."/>
            <person name="Fabre E."/>
            <person name="Fairhead C."/>
            <person name="Ferry-Dumazet H."/>
            <person name="Groppi A."/>
            <person name="Hantraye F."/>
            <person name="Hennequin C."/>
            <person name="Jauniaux N."/>
            <person name="Joyet P."/>
            <person name="Kachouri R."/>
            <person name="Kerrest A."/>
            <person name="Koszul R."/>
            <person name="Lemaire M."/>
            <person name="Lesur I."/>
            <person name="Ma L."/>
            <person name="Muller H."/>
            <person name="Nicaud J.-M."/>
            <person name="Nikolski M."/>
            <person name="Oztas S."/>
            <person name="Ozier-Kalogeropoulos O."/>
            <person name="Pellenz S."/>
            <person name="Potier S."/>
            <person name="Richard G.-F."/>
            <person name="Straub M.-L."/>
            <person name="Suleau A."/>
            <person name="Swennen D."/>
            <person name="Tekaia F."/>
            <person name="Wesolowski-Louvel M."/>
            <person name="Westhof E."/>
            <person name="Wirth B."/>
            <person name="Zeniou-Meyer M."/>
            <person name="Zivanovic Y."/>
            <person name="Bolotin-Fukuhara M."/>
            <person name="Thierry A."/>
            <person name="Bouchier C."/>
            <person name="Caudron B."/>
            <person name="Scarpelli C."/>
            <person name="Gaillardin C."/>
            <person name="Weissenbach J."/>
            <person name="Wincker P."/>
            <person name="Souciet J.-L."/>
        </authorList>
    </citation>
    <scope>NUCLEOTIDE SEQUENCE [LARGE SCALE GENOMIC DNA]</scope>
    <source>
        <strain>ATCC 2001 / BCRC 20586 / JCM 3761 / NBRC 0622 / NRRL Y-65 / CBS 138</strain>
    </source>
</reference>
<name>PFA4_CANGA</name>
<accession>Q6FVE6</accession>
<gene>
    <name evidence="1" type="primary">PFA4</name>
    <name type="ordered locus">CAGL0E02497g</name>
</gene>
<comment type="function">
    <text evidence="1">Mediates the reversible addition of palmitate to target proteins, thereby regulating their membrane association and biological function.</text>
</comment>
<comment type="catalytic activity">
    <reaction evidence="1">
        <text>L-cysteinyl-[protein] + hexadecanoyl-CoA = S-hexadecanoyl-L-cysteinyl-[protein] + CoA</text>
        <dbReference type="Rhea" id="RHEA:36683"/>
        <dbReference type="Rhea" id="RHEA-COMP:10131"/>
        <dbReference type="Rhea" id="RHEA-COMP:11032"/>
        <dbReference type="ChEBI" id="CHEBI:29950"/>
        <dbReference type="ChEBI" id="CHEBI:57287"/>
        <dbReference type="ChEBI" id="CHEBI:57379"/>
        <dbReference type="ChEBI" id="CHEBI:74151"/>
        <dbReference type="EC" id="2.3.1.225"/>
    </reaction>
</comment>
<comment type="subcellular location">
    <subcellularLocation>
        <location evidence="1">Endoplasmic reticulum membrane</location>
        <topology evidence="1">Multi-pass membrane protein</topology>
    </subcellularLocation>
</comment>
<comment type="domain">
    <text evidence="1">The DHHC domain is required for palmitoyltransferase activity.</text>
</comment>
<comment type="similarity">
    <text evidence="1">Belongs to the DHHC palmitoyltransferase family. PFA4 subfamily.</text>
</comment>
<organism>
    <name type="scientific">Candida glabrata (strain ATCC 2001 / BCRC 20586 / JCM 3761 / NBRC 0622 / NRRL Y-65 / CBS 138)</name>
    <name type="common">Yeast</name>
    <name type="synonym">Nakaseomyces glabratus</name>
    <dbReference type="NCBI Taxonomy" id="284593"/>
    <lineage>
        <taxon>Eukaryota</taxon>
        <taxon>Fungi</taxon>
        <taxon>Dikarya</taxon>
        <taxon>Ascomycota</taxon>
        <taxon>Saccharomycotina</taxon>
        <taxon>Saccharomycetes</taxon>
        <taxon>Saccharomycetales</taxon>
        <taxon>Saccharomycetaceae</taxon>
        <taxon>Nakaseomyces</taxon>
    </lineage>
</organism>
<proteinExistence type="inferred from homology"/>
<keyword id="KW-0012">Acyltransferase</keyword>
<keyword id="KW-0256">Endoplasmic reticulum</keyword>
<keyword id="KW-0449">Lipoprotein</keyword>
<keyword id="KW-0472">Membrane</keyword>
<keyword id="KW-0564">Palmitate</keyword>
<keyword id="KW-1185">Reference proteome</keyword>
<keyword id="KW-0808">Transferase</keyword>
<keyword id="KW-0812">Transmembrane</keyword>
<keyword id="KW-1133">Transmembrane helix</keyword>
<feature type="chain" id="PRO_0000212963" description="Palmitoyltransferase PFA4">
    <location>
        <begin position="1"/>
        <end position="376"/>
    </location>
</feature>
<feature type="topological domain" description="Cytoplasmic" evidence="1">
    <location>
        <begin position="1"/>
        <end position="11"/>
    </location>
</feature>
<feature type="transmembrane region" description="Helical" evidence="1">
    <location>
        <begin position="12"/>
        <end position="32"/>
    </location>
</feature>
<feature type="topological domain" description="Lumenal" evidence="1">
    <location>
        <begin position="33"/>
        <end position="40"/>
    </location>
</feature>
<feature type="transmembrane region" description="Helical" evidence="1">
    <location>
        <begin position="41"/>
        <end position="61"/>
    </location>
</feature>
<feature type="topological domain" description="Cytoplasmic" evidence="1">
    <location>
        <begin position="62"/>
        <end position="122"/>
    </location>
</feature>
<feature type="transmembrane region" description="Helical" evidence="1">
    <location>
        <begin position="123"/>
        <end position="143"/>
    </location>
</feature>
<feature type="topological domain" description="Lumenal" evidence="1">
    <location>
        <begin position="144"/>
        <end position="163"/>
    </location>
</feature>
<feature type="transmembrane region" description="Helical" evidence="1">
    <location>
        <begin position="164"/>
        <end position="184"/>
    </location>
</feature>
<feature type="topological domain" description="Cytoplasmic" evidence="1">
    <location>
        <begin position="185"/>
        <end position="376"/>
    </location>
</feature>
<feature type="domain" description="DHHC" evidence="2">
    <location>
        <begin position="78"/>
        <end position="128"/>
    </location>
</feature>
<feature type="active site" description="S-palmitoyl cysteine intermediate" evidence="1">
    <location>
        <position position="108"/>
    </location>
</feature>
<sequence>MPVKLKWPWLGIAIPSFLIASIGYCAHYFILLNFLSLRKQLWYQFCQTMIWLSYYLAIYTPPGKPPTNFKPSKNEWKVYCKKCKCYKPERSHHCKTCNQCVLMMDHHCPWTMNCVGYNNFPHFIRFLFWVIVGTTSLAIFLTTRIHSIWVHRSSPSYLYYKSELIFLTILTPLNAFILLTISILMIRCLFNQIFNGRSQIESWEMDRLETLARMSKLLPILIENVWYIFPNLRNEHVESQAEALLNKKRLSLDELVNFPYDLGPFRNAIQLLGTPPLWLYPFSGPQDDGLHFQKNEESMIEDPNSLNDIILCLPWPPDSTKHLNSTSEHTSNVQIISEEGEQVIRIRTPEKKLSRSEWLNDWGESLEDFGVDVDVE</sequence>
<evidence type="ECO:0000255" key="1">
    <source>
        <dbReference type="HAMAP-Rule" id="MF_03199"/>
    </source>
</evidence>
<evidence type="ECO:0000255" key="2">
    <source>
        <dbReference type="PROSITE-ProRule" id="PRU00067"/>
    </source>
</evidence>